<comment type="function">
    <text evidence="10">Highly reducing polyketide synthase; part of the gene cluster that mediates the biosynthesis of cladosporin, a tricyclic octaketide that acts as an antimalarial agent though inhibition of the Plasmodium falciparum lysyl-tRNA synthetase (PubMed:26783060). The highly reducing polyketide synthase cla2 is responsible for biosynthesis up to the pentaketide stage, including of the tetrahydropyran (THP) ring, whereas the three subsequent ketide extensions with no reduction are catalyzed by the non-reducing polyketide synthase cla3 (PubMed:26783060).</text>
</comment>
<comment type="pathway">
    <text evidence="10">Secondary metabolite biosynthesis.</text>
</comment>
<comment type="domain">
    <text evidence="1">Multidomain protein; including a starter unit:ACP transacylase (SAT) that selects the starter unit; a ketosynthase (KS) that catalyzes repeated decarboxylative condensation to elongate the polyketide backbone; a malonyl-CoA:ACP transacylase (MAT) that selects and transfers the extender unit malonyl-CoA; a product template (PT) domain that controls the immediate cyclization regioselectivity of the reactive polyketide backbone; and an acyl-carrier protein (ACP) that serves as the tether of the growing and completed polyketide via its phosphopantetheinyl arm (By similarity).</text>
</comment>
<comment type="biotechnology">
    <text evidence="7 8 9 11">Cladosporin has been intensely studied for its antimalarial activity though inhibition of the Plasmodium falciparum lysyl-tRNA synthetase (PubMed:22704625, PubMed:24935905, PubMed:26074468). Cladosporin also has antifungal activity against dermatophytes, as well as Penicillium and Aspergillus species (PubMed:5169000).</text>
</comment>
<name>CLA2_CLACD</name>
<feature type="chain" id="PRO_0000437051" description="Highly reducing polyketide synthase cla2">
    <location>
        <begin position="1"/>
        <end position="2368"/>
    </location>
</feature>
<feature type="domain" description="Ketosynthase family 3 (KS3)" evidence="4">
    <location>
        <begin position="10"/>
        <end position="434"/>
    </location>
</feature>
<feature type="domain" description="PKS/mFAS DH" evidence="5">
    <location>
        <begin position="936"/>
        <end position="1255"/>
    </location>
</feature>
<feature type="domain" description="Carrier" evidence="3">
    <location>
        <begin position="2283"/>
        <end position="2360"/>
    </location>
</feature>
<feature type="region of interest" description="Malonyl-CoA:ACP transacylase (MAT) domain" evidence="2">
    <location>
        <begin position="548"/>
        <end position="877"/>
    </location>
</feature>
<feature type="region of interest" description="Dehydratase (DH) domain" evidence="2">
    <location>
        <begin position="936"/>
        <end position="1175"/>
    </location>
</feature>
<feature type="region of interest" description="N-terminal hotdog fold" evidence="5">
    <location>
        <begin position="936"/>
        <end position="1071"/>
    </location>
</feature>
<feature type="region of interest" description="C-terminal hotdog fold" evidence="5">
    <location>
        <begin position="1099"/>
        <end position="1255"/>
    </location>
</feature>
<feature type="region of interest" description="Enoylreductase (ER) domain" evidence="2">
    <location>
        <begin position="1655"/>
        <end position="1967"/>
    </location>
</feature>
<feature type="region of interest" description="Catalytic ketoreductase (KRc) domain" evidence="2">
    <location>
        <begin position="1991"/>
        <end position="2170"/>
    </location>
</feature>
<feature type="active site" description="For beta-ketoacyl synthase activity" evidence="4">
    <location>
        <position position="182"/>
    </location>
</feature>
<feature type="active site" description="For beta-ketoacyl synthase activity" evidence="4">
    <location>
        <position position="317"/>
    </location>
</feature>
<feature type="active site" description="For beta-ketoacyl synthase activity" evidence="4">
    <location>
        <position position="357"/>
    </location>
</feature>
<feature type="active site" description="For malonyltransferase activity" evidence="6">
    <location>
        <position position="638"/>
    </location>
</feature>
<feature type="active site" description="Proton acceptor; for dehydratase activity" evidence="5">
    <location>
        <position position="968"/>
    </location>
</feature>
<feature type="active site" description="Proton donor; for dehydratase activity" evidence="5">
    <location>
        <position position="1165"/>
    </location>
</feature>
<feature type="modified residue" description="O-(pantetheine 4'-phosphoryl)serine" evidence="3">
    <location>
        <position position="2320"/>
    </location>
</feature>
<proteinExistence type="evidence at protein level"/>
<protein>
    <recommendedName>
        <fullName evidence="12">Highly reducing polyketide synthase cla2</fullName>
        <ecNumber evidence="10">2.3.1.-</ecNumber>
    </recommendedName>
    <alternativeName>
        <fullName evidence="12">Cladosporin biosynthesis cluster protein 2</fullName>
    </alternativeName>
</protein>
<keyword id="KW-0511">Multifunctional enzyme</keyword>
<keyword id="KW-0596">Phosphopantetheine</keyword>
<keyword id="KW-0597">Phosphoprotein</keyword>
<keyword id="KW-0808">Transferase</keyword>
<organism>
    <name type="scientific">Cladosporium cladosporioides</name>
    <dbReference type="NCBI Taxonomy" id="29917"/>
    <lineage>
        <taxon>Eukaryota</taxon>
        <taxon>Fungi</taxon>
        <taxon>Dikarya</taxon>
        <taxon>Ascomycota</taxon>
        <taxon>Pezizomycotina</taxon>
        <taxon>Dothideomycetes</taxon>
        <taxon>Dothideomycetidae</taxon>
        <taxon>Cladosporiales</taxon>
        <taxon>Cladosporiaceae</taxon>
        <taxon>Cladosporium</taxon>
    </lineage>
</organism>
<sequence length="2368" mass="257782">MTSSGDSSPQIPIAIVGLGCRFPGDADSPKKFWDILKEGRDAYSPRTDRWNPDAFYHPNKDRANTQPTKGGHFLKQDPYVFDPSFFNITATEAIALDPKQRLALEVAYEALENAGFPLQKVAGSQTACYMGSAMADYRDSISRDFGHAPKYFVLGTCEEMISNRISHFFDMHGPSATVHTACSSSLVATHVACQSLRSGEADMALAGGVGIMLTPDSSLQLNNMSFLNPEGHSRSFDADAGGYARGEGCGILVMKRLDDAVRDGDNIRAVIRGSGVNSDGWTQGVTMPSPEAQAALIKQVFGKNKLDYDTIQYVEAHGTGTKAGDPVETKAIYDTIGRGINKSRKLWIGSVKPNIGHLEAAAGVAGIIKGVLSLENSAIPPNIYFSKPNPAIKLDEWNMAVPTKLVNWPVAQTKRMTVSGFGMGGTNGLVVLEAYVPERLLNGATKVTTAKDTAHSGKRLFVCSSQDQAGFKRIGEAFVDHLDNLGPIASSSGYLANLAHTLSTARAGLSWRTTFVADSKAELREHLTTTLGQDATRVSDTQAQRIGFVFTGQGAQWAGMGVEMLERPVFGASVAESAKLLRSFGCTWDPATELQKAAKESRLAVPEISQPICTIIQIALVDELKSWGVSPAKVVGHSSGEIAAAYTIGALSHRDAMAVAYFRGMASTALKTSAPHLEGGMMAVGTSAEAAQTIIAETKNSISGDITIACVNSPSSVTLSGDAKALEELRKILDARSVFARRLKVDVAYHSSHMNVAAPEYQQSIADIEPRLCSDEVEEGSLPVMVSSVTTEQVSPELLGTYYWIRNLVSPVQFSDALRELVAPGGSDKNDVDLLIEIGPHSALGGPIEQILSFHNVQKVDYKSVLTRGQNALDTSLSLASDLFVRGIQLDMEKVNGDSDCHLLNDLPSYPWNHSKAFRADSRIQRELLQSKHPRHSMIGLKQPMLDESQHVWRNYVRLTDEPWLRGHVVGGTALVPGAGMLSMIFEAVQQLVDPGKPAHSLRVRDVKFSAALTLPEDTSIEVVTTLRPHLVSTSGSTPASWWEFTISSCPGTDQIQDNCRGLVAIEYTNKRSEQMIYEDVNEENSRIADFHRVRDESPLMIRREKFYEHMQKSGYNYGETFQGMETVHLGDGETAFHVKLIDIGETFSKGQLDRPFLIPGSSLDAIFQSIFGSTFKNGAFEVEKPNFLAYIGELEISLDIPGEVGYVMPGVCFSRKHGFNQQSADIFTFDKSLSRMHLAVRDFRMTEPEVGDDASDGFEPWAFTSAPHWNYAFSLLKTEELRSVLSKVTTQDAPVELLRTILHENPSASVLELIPEIGDLAIASSYQLPKGAIQPSQLRYAVAKDIPDSFIDENLVGEVFALDGVGEDDRKISADVLIVPSSLDLLEDRDAILARFLKLAGPAALMITASGLHSARSVFEAHGFQAFPGLNGIASLPGLYSHAEEPSLRQTNRGTRDTSDTDITILEPSSPSFNTTEFSKTLSSRLEDQNYSVTIRKWAGGETEEFQNTTYISLLELEQPFLDNLSDPDFQGIKNLVLGSNRLIWLTLGDDPSFGAVDGLSRVMRSELGTPKFQVMHLSGEAGLLSGPELTVRVLKSPTEDTEFRERDGLLQVIRIFESPDVNQSLRGHLENSTRILPIKQLDYPVRLTVGKPGFLDSLQFIKDRRTEAPLPENEIEIDVHASGVNFRDVMASMGLISTPILGFEASGVVTKCGSQVSQFRTGARVSFVGEHTHSTRIRADPRLVAPIPDDVSFEEAASLPIVGATAYHTLTNLARLRKGQTILIHAAAGGVGQAMIQLASHFGLVIYATVGTEDKRKLLGEKYNIPPENILNSRDASFAKGIKRLTGGRGVDCVINSLSGELLRASWGCVAPFGIFIELGLRDITDNMRLDMRPFSNVTSFTFCNILALMQQDPDAMGLVLKETFKLVSQGILTSPFPTTVFPVEQTQEAFRLMQQGKHRGKLVLSFAGDPQAPVHCEAKESLRLDGNATYLIIGGLGGLGRSMALELVASGARHLAFISRSGDSTPQAKATLAELEQRNLDFRVYRGDVSNEESFLDAMKLCSSDLPPIKGVIQMAMVLKDIIFEKMTHEQWTIPLRPKIQGTWNIHQYFDESRPLDFMVFCSSTSGIHGYPSQSQYAAGNTYQDTLAAYRRAHGLKAVAVNLTIIREVGILAEQGTTGNIAVWEEALGIKEPAFHALMKTLIAGQQGPAGSEFLPPQVSTGLGTADIMSSYNLALPDYFQDPRFGPLAVSTFSTNVAGESQSAAVSLSSKLIEATNVDQASEIITEGLVTKVADMLQIPVSEVDASRPMYRYGVDSLVALEVRNWIVKEMKATIALLEILAAVPMNVLAKTIASRSKHLAATLD</sequence>
<accession>A0A0Y0M151</accession>
<evidence type="ECO:0000250" key="1">
    <source>
        <dbReference type="UniProtKB" id="Q5B0D0"/>
    </source>
</evidence>
<evidence type="ECO:0000255" key="2"/>
<evidence type="ECO:0000255" key="3">
    <source>
        <dbReference type="PROSITE-ProRule" id="PRU00258"/>
    </source>
</evidence>
<evidence type="ECO:0000255" key="4">
    <source>
        <dbReference type="PROSITE-ProRule" id="PRU01348"/>
    </source>
</evidence>
<evidence type="ECO:0000255" key="5">
    <source>
        <dbReference type="PROSITE-ProRule" id="PRU01363"/>
    </source>
</evidence>
<evidence type="ECO:0000255" key="6">
    <source>
        <dbReference type="PROSITE-ProRule" id="PRU10022"/>
    </source>
</evidence>
<evidence type="ECO:0000269" key="7">
    <source>
    </source>
</evidence>
<evidence type="ECO:0000269" key="8">
    <source>
    </source>
</evidence>
<evidence type="ECO:0000269" key="9">
    <source>
    </source>
</evidence>
<evidence type="ECO:0000269" key="10">
    <source>
    </source>
</evidence>
<evidence type="ECO:0000269" key="11">
    <source>
    </source>
</evidence>
<evidence type="ECO:0000303" key="12">
    <source>
    </source>
</evidence>
<gene>
    <name evidence="12" type="primary">cla2</name>
</gene>
<reference key="1">
    <citation type="journal article" date="2016" name="Angew. Chem. Int. Ed.">
        <title>Production of new cladosporin analogues by reconstitution of the polyketide synthases responsible for the biosynthesis of this antimalarial agent.</title>
        <authorList>
            <person name="Cochrane R.V."/>
            <person name="Sanichar R."/>
            <person name="Lambkin G.R."/>
            <person name="Reiz B."/>
            <person name="Xu W."/>
            <person name="Tang Y."/>
            <person name="Vederas J.C."/>
        </authorList>
    </citation>
    <scope>NUCLEOTIDE SEQUENCE [MRNA]</scope>
    <scope>FUNCTION</scope>
    <scope>CATALYTIC ACTIVITY</scope>
</reference>
<reference key="2">
    <citation type="journal article" date="1971" name="J. Antibiot.">
        <title>Cladosporin, a new antifungal metabolite from Cladosporium cladosporioides.</title>
        <authorList>
            <person name="Scott P.M."/>
            <person name="Van Walbeek W."/>
            <person name="MacLean W.M."/>
        </authorList>
    </citation>
    <scope>BIOTECHNOLOGY</scope>
</reference>
<reference key="3">
    <citation type="journal article" date="2012" name="Cell Host Microbe">
        <title>Selective and specific inhibition of the plasmodium falciparum lysyl-tRNA synthetase by the fungal secondary metabolite cladosporin.</title>
        <authorList>
            <person name="Hoepfner D."/>
            <person name="McNamara C.W."/>
            <person name="Lim C.S."/>
            <person name="Studer C."/>
            <person name="Riedl R."/>
            <person name="Aust T."/>
            <person name="McCormack S.L."/>
            <person name="Plouffe D.M."/>
            <person name="Meister S."/>
            <person name="Schuierer S."/>
            <person name="Plikat U."/>
            <person name="Hartmann N."/>
            <person name="Staedtler F."/>
            <person name="Cotesta S."/>
            <person name="Schmitt E.K."/>
            <person name="Petersen F."/>
            <person name="Supek F."/>
            <person name="Glynne R.J."/>
            <person name="Tallarico J.A."/>
            <person name="Porter J.A."/>
            <person name="Fishman M.C."/>
            <person name="Bodenreider C."/>
            <person name="Diagana T.T."/>
            <person name="Movva N.R."/>
            <person name="Winzeler E.A."/>
        </authorList>
    </citation>
    <scope>BIOTECHNOLOGY</scope>
</reference>
<reference key="4">
    <citation type="journal article" date="2014" name="J. Struct. Funct. Genomics">
        <title>Structural basis of malaria parasite lysyl-tRNA synthetase inhibition by cladosporin.</title>
        <authorList>
            <person name="Khan S."/>
            <person name="Sharma A."/>
            <person name="Belrhali H."/>
            <person name="Yogavel M."/>
            <person name="Sharma A."/>
        </authorList>
    </citation>
    <scope>BIOTECHNOLOGY</scope>
</reference>
<reference key="5">
    <citation type="journal article" date="2015" name="Chem. Biol.">
        <title>Structural Basis for Specific Inhibition of tRNA Synthetase by an ATP Competitive Inhibitor.</title>
        <authorList>
            <person name="Fang P."/>
            <person name="Han H."/>
            <person name="Wang J."/>
            <person name="Chen K."/>
            <person name="Chen X."/>
            <person name="Guo M."/>
        </authorList>
    </citation>
    <scope>BIOTECHNOLOGY</scope>
</reference>
<dbReference type="EC" id="2.3.1.-" evidence="10"/>
<dbReference type="EMBL" id="KT037691">
    <property type="protein sequence ID" value="AMB51799.1"/>
    <property type="molecule type" value="mRNA"/>
</dbReference>
<dbReference type="SMR" id="A0A0Y0M151"/>
<dbReference type="GO" id="GO:0004312">
    <property type="term" value="F:fatty acid synthase activity"/>
    <property type="evidence" value="ECO:0007669"/>
    <property type="project" value="TreeGrafter"/>
</dbReference>
<dbReference type="GO" id="GO:0016491">
    <property type="term" value="F:oxidoreductase activity"/>
    <property type="evidence" value="ECO:0007669"/>
    <property type="project" value="InterPro"/>
</dbReference>
<dbReference type="GO" id="GO:0031177">
    <property type="term" value="F:phosphopantetheine binding"/>
    <property type="evidence" value="ECO:0007669"/>
    <property type="project" value="InterPro"/>
</dbReference>
<dbReference type="GO" id="GO:0008270">
    <property type="term" value="F:zinc ion binding"/>
    <property type="evidence" value="ECO:0007669"/>
    <property type="project" value="InterPro"/>
</dbReference>
<dbReference type="GO" id="GO:0006633">
    <property type="term" value="P:fatty acid biosynthetic process"/>
    <property type="evidence" value="ECO:0007669"/>
    <property type="project" value="TreeGrafter"/>
</dbReference>
<dbReference type="GO" id="GO:0044550">
    <property type="term" value="P:secondary metabolite biosynthetic process"/>
    <property type="evidence" value="ECO:0007669"/>
    <property type="project" value="TreeGrafter"/>
</dbReference>
<dbReference type="CDD" id="cd05195">
    <property type="entry name" value="enoyl_red"/>
    <property type="match status" value="1"/>
</dbReference>
<dbReference type="CDD" id="cd00833">
    <property type="entry name" value="PKS"/>
    <property type="match status" value="1"/>
</dbReference>
<dbReference type="FunFam" id="3.40.50.720:FF:000209">
    <property type="entry name" value="Polyketide synthase Pks12"/>
    <property type="match status" value="1"/>
</dbReference>
<dbReference type="Gene3D" id="3.40.47.10">
    <property type="match status" value="1"/>
</dbReference>
<dbReference type="Gene3D" id="1.10.1200.10">
    <property type="entry name" value="ACP-like"/>
    <property type="match status" value="1"/>
</dbReference>
<dbReference type="Gene3D" id="3.40.366.10">
    <property type="entry name" value="Malonyl-Coenzyme A Acyl Carrier Protein, domain 2"/>
    <property type="match status" value="1"/>
</dbReference>
<dbReference type="Gene3D" id="3.90.180.10">
    <property type="entry name" value="Medium-chain alcohol dehydrogenases, catalytic domain"/>
    <property type="match status" value="1"/>
</dbReference>
<dbReference type="Gene3D" id="3.40.50.720">
    <property type="entry name" value="NAD(P)-binding Rossmann-like Domain"/>
    <property type="match status" value="1"/>
</dbReference>
<dbReference type="Gene3D" id="3.10.129.110">
    <property type="entry name" value="Polyketide synthase dehydratase"/>
    <property type="match status" value="1"/>
</dbReference>
<dbReference type="InterPro" id="IPR001227">
    <property type="entry name" value="Ac_transferase_dom_sf"/>
</dbReference>
<dbReference type="InterPro" id="IPR036736">
    <property type="entry name" value="ACP-like_sf"/>
</dbReference>
<dbReference type="InterPro" id="IPR014043">
    <property type="entry name" value="Acyl_transferase_dom"/>
</dbReference>
<dbReference type="InterPro" id="IPR016035">
    <property type="entry name" value="Acyl_Trfase/lysoPLipase"/>
</dbReference>
<dbReference type="InterPro" id="IPR013154">
    <property type="entry name" value="ADH-like_N"/>
</dbReference>
<dbReference type="InterPro" id="IPR011032">
    <property type="entry name" value="GroES-like_sf"/>
</dbReference>
<dbReference type="InterPro" id="IPR014031">
    <property type="entry name" value="Ketoacyl_synth_C"/>
</dbReference>
<dbReference type="InterPro" id="IPR014030">
    <property type="entry name" value="Ketoacyl_synth_N"/>
</dbReference>
<dbReference type="InterPro" id="IPR016036">
    <property type="entry name" value="Malonyl_transacylase_ACP-bd"/>
</dbReference>
<dbReference type="InterPro" id="IPR036291">
    <property type="entry name" value="NAD(P)-bd_dom_sf"/>
</dbReference>
<dbReference type="InterPro" id="IPR032821">
    <property type="entry name" value="PKS_assoc"/>
</dbReference>
<dbReference type="InterPro" id="IPR020841">
    <property type="entry name" value="PKS_Beta-ketoAc_synthase_dom"/>
</dbReference>
<dbReference type="InterPro" id="IPR042104">
    <property type="entry name" value="PKS_dehydratase_sf"/>
</dbReference>
<dbReference type="InterPro" id="IPR020807">
    <property type="entry name" value="PKS_DH"/>
</dbReference>
<dbReference type="InterPro" id="IPR049551">
    <property type="entry name" value="PKS_DH_C"/>
</dbReference>
<dbReference type="InterPro" id="IPR049552">
    <property type="entry name" value="PKS_DH_N"/>
</dbReference>
<dbReference type="InterPro" id="IPR020843">
    <property type="entry name" value="PKS_ER"/>
</dbReference>
<dbReference type="InterPro" id="IPR013968">
    <property type="entry name" value="PKS_KR"/>
</dbReference>
<dbReference type="InterPro" id="IPR049900">
    <property type="entry name" value="PKS_mFAS_DH"/>
</dbReference>
<dbReference type="InterPro" id="IPR050091">
    <property type="entry name" value="PKS_NRPS_Biosynth_Enz"/>
</dbReference>
<dbReference type="InterPro" id="IPR020806">
    <property type="entry name" value="PKS_PP-bd"/>
</dbReference>
<dbReference type="InterPro" id="IPR009081">
    <property type="entry name" value="PP-bd_ACP"/>
</dbReference>
<dbReference type="InterPro" id="IPR006162">
    <property type="entry name" value="Ppantetheine_attach_site"/>
</dbReference>
<dbReference type="InterPro" id="IPR002364">
    <property type="entry name" value="Quin_OxRdtase/zeta-crystal_CS"/>
</dbReference>
<dbReference type="InterPro" id="IPR016039">
    <property type="entry name" value="Thiolase-like"/>
</dbReference>
<dbReference type="PANTHER" id="PTHR43775:SF29">
    <property type="entry name" value="ASPERFURANONE POLYKETIDE SYNTHASE AFOG-RELATED"/>
    <property type="match status" value="1"/>
</dbReference>
<dbReference type="PANTHER" id="PTHR43775">
    <property type="entry name" value="FATTY ACID SYNTHASE"/>
    <property type="match status" value="1"/>
</dbReference>
<dbReference type="Pfam" id="PF23297">
    <property type="entry name" value="ACP_SdgA_C"/>
    <property type="match status" value="1"/>
</dbReference>
<dbReference type="Pfam" id="PF00698">
    <property type="entry name" value="Acyl_transf_1"/>
    <property type="match status" value="1"/>
</dbReference>
<dbReference type="Pfam" id="PF08240">
    <property type="entry name" value="ADH_N"/>
    <property type="match status" value="1"/>
</dbReference>
<dbReference type="Pfam" id="PF13602">
    <property type="entry name" value="ADH_zinc_N_2"/>
    <property type="match status" value="1"/>
</dbReference>
<dbReference type="Pfam" id="PF16197">
    <property type="entry name" value="KAsynt_C_assoc"/>
    <property type="match status" value="1"/>
</dbReference>
<dbReference type="Pfam" id="PF00109">
    <property type="entry name" value="ketoacyl-synt"/>
    <property type="match status" value="1"/>
</dbReference>
<dbReference type="Pfam" id="PF02801">
    <property type="entry name" value="Ketoacyl-synt_C"/>
    <property type="match status" value="1"/>
</dbReference>
<dbReference type="Pfam" id="PF08659">
    <property type="entry name" value="KR"/>
    <property type="match status" value="1"/>
</dbReference>
<dbReference type="Pfam" id="PF21089">
    <property type="entry name" value="PKS_DH_N"/>
    <property type="match status" value="1"/>
</dbReference>
<dbReference type="Pfam" id="PF14765">
    <property type="entry name" value="PS-DH"/>
    <property type="match status" value="1"/>
</dbReference>
<dbReference type="SMART" id="SM00827">
    <property type="entry name" value="PKS_AT"/>
    <property type="match status" value="1"/>
</dbReference>
<dbReference type="SMART" id="SM00826">
    <property type="entry name" value="PKS_DH"/>
    <property type="match status" value="1"/>
</dbReference>
<dbReference type="SMART" id="SM00829">
    <property type="entry name" value="PKS_ER"/>
    <property type="match status" value="1"/>
</dbReference>
<dbReference type="SMART" id="SM00822">
    <property type="entry name" value="PKS_KR"/>
    <property type="match status" value="1"/>
</dbReference>
<dbReference type="SMART" id="SM00825">
    <property type="entry name" value="PKS_KS"/>
    <property type="match status" value="1"/>
</dbReference>
<dbReference type="SMART" id="SM00823">
    <property type="entry name" value="PKS_PP"/>
    <property type="match status" value="1"/>
</dbReference>
<dbReference type="SUPFAM" id="SSF47336">
    <property type="entry name" value="ACP-like"/>
    <property type="match status" value="1"/>
</dbReference>
<dbReference type="SUPFAM" id="SSF52151">
    <property type="entry name" value="FabD/lysophospholipase-like"/>
    <property type="match status" value="1"/>
</dbReference>
<dbReference type="SUPFAM" id="SSF50129">
    <property type="entry name" value="GroES-like"/>
    <property type="match status" value="1"/>
</dbReference>
<dbReference type="SUPFAM" id="SSF51735">
    <property type="entry name" value="NAD(P)-binding Rossmann-fold domains"/>
    <property type="match status" value="2"/>
</dbReference>
<dbReference type="SUPFAM" id="SSF55048">
    <property type="entry name" value="Probable ACP-binding domain of malonyl-CoA ACP transacylase"/>
    <property type="match status" value="1"/>
</dbReference>
<dbReference type="SUPFAM" id="SSF53901">
    <property type="entry name" value="Thiolase-like"/>
    <property type="match status" value="1"/>
</dbReference>
<dbReference type="PROSITE" id="PS50075">
    <property type="entry name" value="CARRIER"/>
    <property type="match status" value="1"/>
</dbReference>
<dbReference type="PROSITE" id="PS52004">
    <property type="entry name" value="KS3_2"/>
    <property type="match status" value="1"/>
</dbReference>
<dbReference type="PROSITE" id="PS00012">
    <property type="entry name" value="PHOSPHOPANTETHEINE"/>
    <property type="match status" value="1"/>
</dbReference>
<dbReference type="PROSITE" id="PS52019">
    <property type="entry name" value="PKS_MFAS_DH"/>
    <property type="match status" value="1"/>
</dbReference>
<dbReference type="PROSITE" id="PS01162">
    <property type="entry name" value="QOR_ZETA_CRYSTAL"/>
    <property type="match status" value="1"/>
</dbReference>